<organism>
    <name type="scientific">Aeromonas salmonicida (strain A449)</name>
    <dbReference type="NCBI Taxonomy" id="382245"/>
    <lineage>
        <taxon>Bacteria</taxon>
        <taxon>Pseudomonadati</taxon>
        <taxon>Pseudomonadota</taxon>
        <taxon>Gammaproteobacteria</taxon>
        <taxon>Aeromonadales</taxon>
        <taxon>Aeromonadaceae</taxon>
        <taxon>Aeromonas</taxon>
    </lineage>
</organism>
<comment type="cofactor">
    <cofactor evidence="1">
        <name>Zn(2+)</name>
        <dbReference type="ChEBI" id="CHEBI:29105"/>
    </cofactor>
    <text evidence="1">Binds 1 zinc ion per subunit.</text>
</comment>
<comment type="subcellular location">
    <subcellularLocation>
        <location evidence="1">Cell inner membrane</location>
        <topology evidence="1">Multi-pass membrane protein</topology>
    </subcellularLocation>
</comment>
<comment type="similarity">
    <text evidence="1">Belongs to the peptidase M48B family.</text>
</comment>
<accession>A4SPR3</accession>
<gene>
    <name evidence="1" type="primary">htpX</name>
    <name type="ordered locus">ASA_2873</name>
</gene>
<evidence type="ECO:0000255" key="1">
    <source>
        <dbReference type="HAMAP-Rule" id="MF_00188"/>
    </source>
</evidence>
<sequence>MKRIMLFLVTNLAVMLVLGVVLNILFSVLGINKSSISGLLMFCAVFGFGGSFISLLMSKWMAKRSYGVQVIEQPRNETEHWLVSTVARQAREAGIKMPEVGIYDSPEMNAFATGARRDDSLVAVSSGLLYSMSRDEAEAVLAHEVSHVANGDMVTLTLIQGVVNTFVMFFARIVAGVISNFFSSNNDEESSSSGGFAYMITVFVLEMAFGVLASMIVMWFSRQREFRADAGAAKLAGRDKMIAALQRLSRGAEPQMEGSMMAFGINGKRSMSELFMSHPPIEQRIAALRG</sequence>
<dbReference type="EC" id="3.4.24.-" evidence="1"/>
<dbReference type="EMBL" id="CP000644">
    <property type="protein sequence ID" value="ABO90885.1"/>
    <property type="molecule type" value="Genomic_DNA"/>
</dbReference>
<dbReference type="RefSeq" id="WP_005313012.1">
    <property type="nucleotide sequence ID" value="NC_009348.1"/>
</dbReference>
<dbReference type="SMR" id="A4SPR3"/>
<dbReference type="STRING" id="29491.GCA_000820065_00847"/>
<dbReference type="MEROPS" id="M48.002"/>
<dbReference type="GeneID" id="79880595"/>
<dbReference type="KEGG" id="asa:ASA_2873"/>
<dbReference type="eggNOG" id="COG0501">
    <property type="taxonomic scope" value="Bacteria"/>
</dbReference>
<dbReference type="HOGENOM" id="CLU_042266_1_0_6"/>
<dbReference type="Proteomes" id="UP000000225">
    <property type="component" value="Chromosome"/>
</dbReference>
<dbReference type="GO" id="GO:0005886">
    <property type="term" value="C:plasma membrane"/>
    <property type="evidence" value="ECO:0007669"/>
    <property type="project" value="UniProtKB-SubCell"/>
</dbReference>
<dbReference type="GO" id="GO:0004222">
    <property type="term" value="F:metalloendopeptidase activity"/>
    <property type="evidence" value="ECO:0007669"/>
    <property type="project" value="UniProtKB-UniRule"/>
</dbReference>
<dbReference type="GO" id="GO:0008270">
    <property type="term" value="F:zinc ion binding"/>
    <property type="evidence" value="ECO:0007669"/>
    <property type="project" value="UniProtKB-UniRule"/>
</dbReference>
<dbReference type="GO" id="GO:0006508">
    <property type="term" value="P:proteolysis"/>
    <property type="evidence" value="ECO:0007669"/>
    <property type="project" value="UniProtKB-KW"/>
</dbReference>
<dbReference type="CDD" id="cd07335">
    <property type="entry name" value="M48B_HtpX_like"/>
    <property type="match status" value="1"/>
</dbReference>
<dbReference type="FunFam" id="3.30.2010.10:FF:000001">
    <property type="entry name" value="Protease HtpX"/>
    <property type="match status" value="1"/>
</dbReference>
<dbReference type="Gene3D" id="3.30.2010.10">
    <property type="entry name" value="Metalloproteases ('zincins'), catalytic domain"/>
    <property type="match status" value="1"/>
</dbReference>
<dbReference type="HAMAP" id="MF_00188">
    <property type="entry name" value="Pept_M48_protease_HtpX"/>
    <property type="match status" value="1"/>
</dbReference>
<dbReference type="InterPro" id="IPR050083">
    <property type="entry name" value="HtpX_protease"/>
</dbReference>
<dbReference type="InterPro" id="IPR022919">
    <property type="entry name" value="Pept_M48_protease_HtpX"/>
</dbReference>
<dbReference type="InterPro" id="IPR001915">
    <property type="entry name" value="Peptidase_M48"/>
</dbReference>
<dbReference type="NCBIfam" id="NF003965">
    <property type="entry name" value="PRK05457.1"/>
    <property type="match status" value="1"/>
</dbReference>
<dbReference type="PANTHER" id="PTHR43221">
    <property type="entry name" value="PROTEASE HTPX"/>
    <property type="match status" value="1"/>
</dbReference>
<dbReference type="PANTHER" id="PTHR43221:SF1">
    <property type="entry name" value="PROTEASE HTPX"/>
    <property type="match status" value="1"/>
</dbReference>
<dbReference type="Pfam" id="PF01435">
    <property type="entry name" value="Peptidase_M48"/>
    <property type="match status" value="1"/>
</dbReference>
<reference key="1">
    <citation type="journal article" date="2008" name="BMC Genomics">
        <title>The genome of Aeromonas salmonicida subsp. salmonicida A449: insights into the evolution of a fish pathogen.</title>
        <authorList>
            <person name="Reith M.E."/>
            <person name="Singh R.K."/>
            <person name="Curtis B."/>
            <person name="Boyd J.M."/>
            <person name="Bouevitch A."/>
            <person name="Kimball J."/>
            <person name="Munholland J."/>
            <person name="Murphy C."/>
            <person name="Sarty D."/>
            <person name="Williams J."/>
            <person name="Nash J.H."/>
            <person name="Johnson S.C."/>
            <person name="Brown L.L."/>
        </authorList>
    </citation>
    <scope>NUCLEOTIDE SEQUENCE [LARGE SCALE GENOMIC DNA]</scope>
    <source>
        <strain>A449</strain>
    </source>
</reference>
<protein>
    <recommendedName>
        <fullName evidence="1">Protease HtpX</fullName>
        <ecNumber evidence="1">3.4.24.-</ecNumber>
    </recommendedName>
    <alternativeName>
        <fullName evidence="1">Heat shock protein HtpX</fullName>
    </alternativeName>
</protein>
<feature type="chain" id="PRO_1000020839" description="Protease HtpX">
    <location>
        <begin position="1"/>
        <end position="290"/>
    </location>
</feature>
<feature type="transmembrane region" description="Helical" evidence="1">
    <location>
        <begin position="6"/>
        <end position="26"/>
    </location>
</feature>
<feature type="transmembrane region" description="Helical" evidence="1">
    <location>
        <begin position="36"/>
        <end position="56"/>
    </location>
</feature>
<feature type="transmembrane region" description="Helical" evidence="1">
    <location>
        <begin position="158"/>
        <end position="178"/>
    </location>
</feature>
<feature type="transmembrane region" description="Helical" evidence="1">
    <location>
        <begin position="200"/>
        <end position="220"/>
    </location>
</feature>
<feature type="active site" evidence="1">
    <location>
        <position position="144"/>
    </location>
</feature>
<feature type="binding site" evidence="1">
    <location>
        <position position="143"/>
    </location>
    <ligand>
        <name>Zn(2+)</name>
        <dbReference type="ChEBI" id="CHEBI:29105"/>
        <note>catalytic</note>
    </ligand>
</feature>
<feature type="binding site" evidence="1">
    <location>
        <position position="147"/>
    </location>
    <ligand>
        <name>Zn(2+)</name>
        <dbReference type="ChEBI" id="CHEBI:29105"/>
        <note>catalytic</note>
    </ligand>
</feature>
<feature type="binding site" evidence="1">
    <location>
        <position position="225"/>
    </location>
    <ligand>
        <name>Zn(2+)</name>
        <dbReference type="ChEBI" id="CHEBI:29105"/>
        <note>catalytic</note>
    </ligand>
</feature>
<proteinExistence type="inferred from homology"/>
<name>HTPX_AERS4</name>
<keyword id="KW-0997">Cell inner membrane</keyword>
<keyword id="KW-1003">Cell membrane</keyword>
<keyword id="KW-0378">Hydrolase</keyword>
<keyword id="KW-0472">Membrane</keyword>
<keyword id="KW-0479">Metal-binding</keyword>
<keyword id="KW-0482">Metalloprotease</keyword>
<keyword id="KW-0645">Protease</keyword>
<keyword id="KW-0812">Transmembrane</keyword>
<keyword id="KW-1133">Transmembrane helix</keyword>
<keyword id="KW-0862">Zinc</keyword>